<dbReference type="EC" id="3.4.23.-" evidence="1"/>
<dbReference type="EMBL" id="NYMT01000001">
    <property type="protein sequence ID" value="PKC49510.1"/>
    <property type="molecule type" value="Genomic_DNA"/>
</dbReference>
<dbReference type="EMBL" id="KE123882">
    <property type="protein sequence ID" value="EWC85658.1"/>
    <property type="molecule type" value="Genomic_DNA"/>
</dbReference>
<dbReference type="SMR" id="A0A2I0C265"/>
<dbReference type="EnsemblProtists" id="EWC85658">
    <property type="protein sequence ID" value="EWC85658"/>
    <property type="gene ID" value="PFNF54_05325"/>
</dbReference>
<dbReference type="VEuPathDB" id="PlasmoDB:PfNF54_140034000"/>
<dbReference type="Proteomes" id="UP000030673">
    <property type="component" value="Unassembled WGS sequence"/>
</dbReference>
<dbReference type="Proteomes" id="UP000232684">
    <property type="component" value="Unassembled WGS sequence"/>
</dbReference>
<dbReference type="GO" id="GO:0031410">
    <property type="term" value="C:cytoplasmic vesicle"/>
    <property type="evidence" value="ECO:0007669"/>
    <property type="project" value="UniProtKB-KW"/>
</dbReference>
<dbReference type="GO" id="GO:0016020">
    <property type="term" value="C:membrane"/>
    <property type="evidence" value="ECO:0007669"/>
    <property type="project" value="UniProtKB-SubCell"/>
</dbReference>
<dbReference type="GO" id="GO:0020008">
    <property type="term" value="C:rhoptry"/>
    <property type="evidence" value="ECO:0000314"/>
    <property type="project" value="UniProtKB"/>
</dbReference>
<dbReference type="GO" id="GO:0004190">
    <property type="term" value="F:aspartic-type endopeptidase activity"/>
    <property type="evidence" value="ECO:0007669"/>
    <property type="project" value="UniProtKB-KW"/>
</dbReference>
<dbReference type="GO" id="GO:0085017">
    <property type="term" value="P:entry into host cell by a symbiont-containing vacuole"/>
    <property type="evidence" value="ECO:0000315"/>
    <property type="project" value="UniProtKB"/>
</dbReference>
<dbReference type="GO" id="GO:0016485">
    <property type="term" value="P:protein processing"/>
    <property type="evidence" value="ECO:0000315"/>
    <property type="project" value="UniProtKB"/>
</dbReference>
<dbReference type="CDD" id="cd05471">
    <property type="entry name" value="pepsin_like"/>
    <property type="match status" value="1"/>
</dbReference>
<dbReference type="FunFam" id="2.40.70.10:FF:000115">
    <property type="entry name" value="Lysosomal aspartic protease"/>
    <property type="match status" value="1"/>
</dbReference>
<dbReference type="FunFam" id="2.40.70.10:FF:000128">
    <property type="entry name" value="Plasmepsin IX"/>
    <property type="match status" value="1"/>
</dbReference>
<dbReference type="Gene3D" id="2.40.70.10">
    <property type="entry name" value="Acid Proteases"/>
    <property type="match status" value="3"/>
</dbReference>
<dbReference type="InterPro" id="IPR001461">
    <property type="entry name" value="Aspartic_peptidase_A1"/>
</dbReference>
<dbReference type="InterPro" id="IPR034164">
    <property type="entry name" value="Pepsin-like_dom"/>
</dbReference>
<dbReference type="InterPro" id="IPR033121">
    <property type="entry name" value="PEPTIDASE_A1"/>
</dbReference>
<dbReference type="InterPro" id="IPR021109">
    <property type="entry name" value="Peptidase_aspartic_dom_sf"/>
</dbReference>
<dbReference type="PANTHER" id="PTHR47966">
    <property type="entry name" value="BETA-SITE APP-CLEAVING ENZYME, ISOFORM A-RELATED"/>
    <property type="match status" value="1"/>
</dbReference>
<dbReference type="PANTHER" id="PTHR47966:SF51">
    <property type="entry name" value="BETA-SITE APP-CLEAVING ENZYME, ISOFORM A-RELATED"/>
    <property type="match status" value="1"/>
</dbReference>
<dbReference type="Pfam" id="PF00026">
    <property type="entry name" value="Asp"/>
    <property type="match status" value="2"/>
</dbReference>
<dbReference type="PRINTS" id="PR00792">
    <property type="entry name" value="PEPSIN"/>
</dbReference>
<dbReference type="SUPFAM" id="SSF50630">
    <property type="entry name" value="Acid proteases"/>
    <property type="match status" value="1"/>
</dbReference>
<dbReference type="PROSITE" id="PS00141">
    <property type="entry name" value="ASP_PROTEASE"/>
    <property type="match status" value="1"/>
</dbReference>
<dbReference type="PROSITE" id="PS51767">
    <property type="entry name" value="PEPTIDASE_A1"/>
    <property type="match status" value="1"/>
</dbReference>
<name>PLM9_PLAFO</name>
<sequence length="627" mass="74183">MFFINFKKIKKKQFPIYLTQHRIITVFLIFIYFINLKDCFHINNSRILSDVDKHRGLYYNIPKCNVCHKCSICTHENGEAQNVIPMVAIPSKRKHIQDINKEREENKYPLHIFEEKDIYNNKDNVVKKEDIYKLRKKKKQKKNCLNFLEKDTMFLSPSHDKETFHINHMNKIKDEKYKQEYEEEKEIYDNTNTSQEKNETNNEQNLNINLINNDKVTLPLQQLEDSQYVGYIQIGTPPQTIRPIFDTGSTNIWIVSTKCKDETCLKVHRYNHKLSSSFKYYEPHTNLDIMFGTGIIQGVIGVETFKIGPFEIKNQSFGLVKREKASDNKSNVFERINFEGIVGLAFPEMLSTGKSTLYENLMSSYKLQHNEFSIYIGKDSKYSALIFGGVDKNFFEGDIYMFPVVKEYYWEIHFDGLYIDHQKFCCGVNSIVYDLKKKDQENNKLFFTRKYFRKNKFKTHLRKYLLKKIKHQKKQKHSNHKKKKLNKKKNYLIFDSGTSFNSVPKDEIEYFFRVVPSKKCDDSNIDQVVSSYPNLTYVINKMPFTLTPSQYLVRKNDMCKPAFMEIEVSSEYGHAYILGNATFMRYYYTVYRRGNNNNSSYVGIAKAVHTEENEKYLSSLHNKINNL</sequence>
<organism evidence="9">
    <name type="scientific">Plasmodium falciparum (isolate NF54)</name>
    <dbReference type="NCBI Taxonomy" id="5843"/>
    <lineage>
        <taxon>Eukaryota</taxon>
        <taxon>Sar</taxon>
        <taxon>Alveolata</taxon>
        <taxon>Apicomplexa</taxon>
        <taxon>Aconoidasida</taxon>
        <taxon>Haemosporida</taxon>
        <taxon>Plasmodiidae</taxon>
        <taxon>Plasmodium</taxon>
        <taxon>Plasmodium (Laverania)</taxon>
    </lineage>
</organism>
<gene>
    <name evidence="5" type="primary">PMIX</name>
    <name evidence="7" type="ORF">CK202_0216</name>
</gene>
<proteinExistence type="evidence at protein level"/>
<protein>
    <recommendedName>
        <fullName evidence="5">Plasmepsin IX</fullName>
        <ecNumber evidence="1">3.4.23.-</ecNumber>
    </recommendedName>
    <alternativeName>
        <fullName evidence="6">Plasmepsin 9</fullName>
    </alternativeName>
</protein>
<comment type="function">
    <text evidence="1 4">During the asexual blood stage, initiates the proteolytic maturation of several rhoptry proteins and thus, is required for merozoite invasion of host erythrocytes and probably the subsequent development of the ring-stage (PubMed:29074774). Cleaves rhoptry associated protein 1 RAP1 and apical sushi protein ASP during schizont maturation (PubMed:29074774). Also cleaves rhoptry protein RON3 (By similarity).</text>
</comment>
<comment type="subcellular location">
    <subcellularLocation>
        <location evidence="2">Membrane</location>
        <topology evidence="6">Single-pass type II membrane protein</topology>
    </subcellularLocation>
    <subcellularLocation>
        <location evidence="4">Cytoplasmic vesicle</location>
        <location evidence="4">Secretory vesicle</location>
        <location evidence="4">Rhoptry</location>
    </subcellularLocation>
    <text evidence="4">In schizonts, localizes to the bulb of rhoptries.</text>
</comment>
<comment type="developmental stage">
    <text evidence="4">Expressed during the asexual blood stage, in schizonts and free merozoites (at protein level).</text>
</comment>
<comment type="PTM">
    <text evidence="1">Autocleaved into a p55 mature form.</text>
</comment>
<comment type="disruption phenotype">
    <text evidence="4">Normal asexual development in host erythrocytes; however, erythrocyte invasion by newly released merozoites is severely impaired (PubMed:29074774). Abnormal rhoptry morphology and impaired processing of rhoptry-associated protein RAP1 (PubMed:29074774).</text>
</comment>
<comment type="similarity">
    <text evidence="6">Belongs to the peptidase A1 family.</text>
</comment>
<comment type="caution">
    <text evidence="6">It is unclear if PMIX is glycosylated as other members of the same enzyme family, i.e. PMI and PMII, are not.</text>
</comment>
<accession>A0A2I0C265</accession>
<accession>W7JL89</accession>
<reference evidence="9" key="1">
    <citation type="submission" date="2017-11" db="EMBL/GenBank/DDBJ databases">
        <title>Plasmodium falciparum NF54 genome assembly.</title>
        <authorList>
            <person name="Bryant J.M."/>
            <person name="Baumgarten S."/>
            <person name="Scheidig-Benatar C."/>
            <person name="Scherf A."/>
        </authorList>
    </citation>
    <scope>NUCLEOTIDE SEQUENCE [LARGE SCALE GENOMIC DNA]</scope>
    <source>
        <strain evidence="9">NF54</strain>
    </source>
</reference>
<reference evidence="8" key="2">
    <citation type="submission" date="2013-02" db="EMBL/GenBank/DDBJ databases">
        <title>The Genome Sequence of Plasmodium falciparum NF54.</title>
        <authorList>
            <consortium name="The Broad Institute Genome Sequencing Platform"/>
            <consortium name="The Broad Institute Genome Sequencing Center for Infectious Disease"/>
            <person name="Neafsey D."/>
            <person name="Cheeseman I."/>
            <person name="Volkman S."/>
            <person name="Adams J."/>
            <person name="Walker B."/>
            <person name="Young S.K."/>
            <person name="Zeng Q."/>
            <person name="Gargeya S."/>
            <person name="Fitzgerald M."/>
            <person name="Haas B."/>
            <person name="Abouelleil A."/>
            <person name="Alvarado L."/>
            <person name="Arachchi H.M."/>
            <person name="Berlin A.M."/>
            <person name="Chapman S.B."/>
            <person name="Dewar J."/>
            <person name="Goldberg J."/>
            <person name="Griggs A."/>
            <person name="Gujja S."/>
            <person name="Hansen M."/>
            <person name="Howarth C."/>
            <person name="Imamovic A."/>
            <person name="Larimer J."/>
            <person name="McCowan C."/>
            <person name="Murphy C."/>
            <person name="Neiman D."/>
            <person name="Pearson M."/>
            <person name="Priest M."/>
            <person name="Roberts A."/>
            <person name="Saif S."/>
            <person name="Shea T."/>
            <person name="Sisk P."/>
            <person name="Sykes S."/>
            <person name="Wortman J."/>
            <person name="Nusbaum C."/>
            <person name="Birren B."/>
        </authorList>
    </citation>
    <scope>NUCLEOTIDE SEQUENCE [LARGE SCALE GENOMIC DNA] OF 1-250</scope>
    <source>
        <strain evidence="8">NF54</strain>
    </source>
</reference>
<reference evidence="6" key="3">
    <citation type="journal article" date="2017" name="Science">
        <title>Plasmepsins IX and X are essential and druggable mediators of malaria parasite egress and invasion.</title>
        <authorList>
            <person name="Nasamu A.S."/>
            <person name="Glushakova S."/>
            <person name="Russo I."/>
            <person name="Vaupel B."/>
            <person name="Oksman A."/>
            <person name="Kim A.S."/>
            <person name="Fremont D.H."/>
            <person name="Tolia N."/>
            <person name="Beck J.R."/>
            <person name="Meyers M.J."/>
            <person name="Niles J.C."/>
            <person name="Zimmerberg J."/>
            <person name="Goldberg D.E."/>
        </authorList>
    </citation>
    <scope>FUNCTION</scope>
    <scope>SUBCELLULAR LOCATION</scope>
    <scope>DEVELOPMENTAL STAGE</scope>
    <scope>DISRUPTION PHENOTYPE</scope>
</reference>
<evidence type="ECO:0000250" key="1">
    <source>
        <dbReference type="UniProtKB" id="Q8ILG2"/>
    </source>
</evidence>
<evidence type="ECO:0000255" key="2"/>
<evidence type="ECO:0000255" key="3">
    <source>
        <dbReference type="PROSITE-ProRule" id="PRU01103"/>
    </source>
</evidence>
<evidence type="ECO:0000269" key="4">
    <source>
    </source>
</evidence>
<evidence type="ECO:0000303" key="5">
    <source>
    </source>
</evidence>
<evidence type="ECO:0000305" key="6"/>
<evidence type="ECO:0000312" key="7">
    <source>
        <dbReference type="EMBL" id="PKC49510.1"/>
    </source>
</evidence>
<evidence type="ECO:0000312" key="8">
    <source>
        <dbReference type="Proteomes" id="UP000030673"/>
    </source>
</evidence>
<evidence type="ECO:0000312" key="9">
    <source>
        <dbReference type="Proteomes" id="UP000232684"/>
    </source>
</evidence>
<feature type="propeptide" id="PRO_0000453737" evidence="6">
    <location>
        <begin position="1"/>
        <end status="unknown"/>
    </location>
</feature>
<feature type="chain" id="PRO_0000453738" description="Plasmepsin IX">
    <location>
        <begin status="unknown"/>
        <end position="627"/>
    </location>
</feature>
<feature type="topological domain" description="Cytoplasmic" evidence="6">
    <location>
        <begin position="1"/>
        <end position="13"/>
    </location>
</feature>
<feature type="transmembrane region" description="Helical; Signal-anchor for type II membrane protein" evidence="2">
    <location>
        <begin position="14"/>
        <end position="34"/>
    </location>
</feature>
<feature type="topological domain" description="Lumenal" evidence="6">
    <location>
        <begin position="35"/>
        <end position="627"/>
    </location>
</feature>
<feature type="domain" description="Peptidase A1" evidence="3">
    <location>
        <begin position="228"/>
        <end position="605"/>
    </location>
</feature>
<feature type="active site" evidence="3">
    <location>
        <position position="246"/>
    </location>
</feature>
<feature type="active site" evidence="3">
    <location>
        <position position="495"/>
    </location>
</feature>
<keyword id="KW-0064">Aspartyl protease</keyword>
<keyword id="KW-0968">Cytoplasmic vesicle</keyword>
<keyword id="KW-0378">Hydrolase</keyword>
<keyword id="KW-0472">Membrane</keyword>
<keyword id="KW-0645">Protease</keyword>
<keyword id="KW-1185">Reference proteome</keyword>
<keyword id="KW-0735">Signal-anchor</keyword>
<keyword id="KW-0812">Transmembrane</keyword>
<keyword id="KW-1133">Transmembrane helix</keyword>
<keyword id="KW-0865">Zymogen</keyword>